<reference key="1">
    <citation type="submission" date="2009-06" db="EMBL/GenBank/DDBJ databases">
        <title>Complete sequence of chromosome of Geopacillus sp. WCH70.</title>
        <authorList>
            <consortium name="US DOE Joint Genome Institute"/>
            <person name="Lucas S."/>
            <person name="Copeland A."/>
            <person name="Lapidus A."/>
            <person name="Glavina del Rio T."/>
            <person name="Dalin E."/>
            <person name="Tice H."/>
            <person name="Bruce D."/>
            <person name="Goodwin L."/>
            <person name="Pitluck S."/>
            <person name="Chertkov O."/>
            <person name="Brettin T."/>
            <person name="Detter J.C."/>
            <person name="Han C."/>
            <person name="Larimer F."/>
            <person name="Land M."/>
            <person name="Hauser L."/>
            <person name="Kyrpides N."/>
            <person name="Mikhailova N."/>
            <person name="Brumm P."/>
            <person name="Mead D.A."/>
            <person name="Richardson P."/>
        </authorList>
    </citation>
    <scope>NUCLEOTIDE SEQUENCE [LARGE SCALE GENOMIC DNA]</scope>
    <source>
        <strain>WCH70</strain>
    </source>
</reference>
<evidence type="ECO:0000255" key="1">
    <source>
        <dbReference type="HAMAP-Rule" id="MF_00501"/>
    </source>
</evidence>
<evidence type="ECO:0000305" key="2"/>
<keyword id="KW-0479">Metal-binding</keyword>
<keyword id="KW-0687">Ribonucleoprotein</keyword>
<keyword id="KW-0689">Ribosomal protein</keyword>
<keyword id="KW-0694">RNA-binding</keyword>
<keyword id="KW-0699">rRNA-binding</keyword>
<keyword id="KW-0862">Zinc</keyword>
<feature type="chain" id="PRO_1000206524" description="Large ribosomal subunit protein bL31">
    <location>
        <begin position="1"/>
        <end position="66"/>
    </location>
</feature>
<feature type="binding site" evidence="1">
    <location>
        <position position="16"/>
    </location>
    <ligand>
        <name>Zn(2+)</name>
        <dbReference type="ChEBI" id="CHEBI:29105"/>
    </ligand>
</feature>
<feature type="binding site" evidence="1">
    <location>
        <position position="18"/>
    </location>
    <ligand>
        <name>Zn(2+)</name>
        <dbReference type="ChEBI" id="CHEBI:29105"/>
    </ligand>
</feature>
<feature type="binding site" evidence="1">
    <location>
        <position position="36"/>
    </location>
    <ligand>
        <name>Zn(2+)</name>
        <dbReference type="ChEBI" id="CHEBI:29105"/>
    </ligand>
</feature>
<feature type="binding site" evidence="1">
    <location>
        <position position="39"/>
    </location>
    <ligand>
        <name>Zn(2+)</name>
        <dbReference type="ChEBI" id="CHEBI:29105"/>
    </ligand>
</feature>
<sequence>MKPGIHPEYKKVIVRCACGNEFESGSVKDELRVEICSECHPFFTGRQKFVSAAGRVDKFNKKYGLK</sequence>
<protein>
    <recommendedName>
        <fullName evidence="1">Large ribosomal subunit protein bL31</fullName>
    </recommendedName>
    <alternativeName>
        <fullName evidence="2">50S ribosomal protein L31</fullName>
    </alternativeName>
</protein>
<name>RL31_GEOSW</name>
<organism>
    <name type="scientific">Geobacillus sp. (strain WCH70)</name>
    <dbReference type="NCBI Taxonomy" id="471223"/>
    <lineage>
        <taxon>Bacteria</taxon>
        <taxon>Bacillati</taxon>
        <taxon>Bacillota</taxon>
        <taxon>Bacilli</taxon>
        <taxon>Bacillales</taxon>
        <taxon>Anoxybacillaceae</taxon>
        <taxon>Geobacillus</taxon>
    </lineage>
</organism>
<accession>C5D9P0</accession>
<dbReference type="EMBL" id="CP001638">
    <property type="protein sequence ID" value="ACS25968.1"/>
    <property type="molecule type" value="Genomic_DNA"/>
</dbReference>
<dbReference type="SMR" id="C5D9P0"/>
<dbReference type="STRING" id="471223.GWCH70_3328"/>
<dbReference type="KEGG" id="gwc:GWCH70_3328"/>
<dbReference type="eggNOG" id="COG0254">
    <property type="taxonomic scope" value="Bacteria"/>
</dbReference>
<dbReference type="HOGENOM" id="CLU_114306_4_3_9"/>
<dbReference type="OrthoDB" id="9803251at2"/>
<dbReference type="GO" id="GO:1990904">
    <property type="term" value="C:ribonucleoprotein complex"/>
    <property type="evidence" value="ECO:0007669"/>
    <property type="project" value="UniProtKB-KW"/>
</dbReference>
<dbReference type="GO" id="GO:0005840">
    <property type="term" value="C:ribosome"/>
    <property type="evidence" value="ECO:0007669"/>
    <property type="project" value="UniProtKB-KW"/>
</dbReference>
<dbReference type="GO" id="GO:0046872">
    <property type="term" value="F:metal ion binding"/>
    <property type="evidence" value="ECO:0007669"/>
    <property type="project" value="UniProtKB-KW"/>
</dbReference>
<dbReference type="GO" id="GO:0019843">
    <property type="term" value="F:rRNA binding"/>
    <property type="evidence" value="ECO:0007669"/>
    <property type="project" value="UniProtKB-KW"/>
</dbReference>
<dbReference type="GO" id="GO:0003735">
    <property type="term" value="F:structural constituent of ribosome"/>
    <property type="evidence" value="ECO:0007669"/>
    <property type="project" value="InterPro"/>
</dbReference>
<dbReference type="GO" id="GO:0006412">
    <property type="term" value="P:translation"/>
    <property type="evidence" value="ECO:0007669"/>
    <property type="project" value="UniProtKB-UniRule"/>
</dbReference>
<dbReference type="Gene3D" id="4.10.830.30">
    <property type="entry name" value="Ribosomal protein L31"/>
    <property type="match status" value="1"/>
</dbReference>
<dbReference type="HAMAP" id="MF_00501">
    <property type="entry name" value="Ribosomal_bL31_1"/>
    <property type="match status" value="1"/>
</dbReference>
<dbReference type="InterPro" id="IPR034704">
    <property type="entry name" value="Ribosomal_bL28/bL31-like_sf"/>
</dbReference>
<dbReference type="InterPro" id="IPR002150">
    <property type="entry name" value="Ribosomal_bL31"/>
</dbReference>
<dbReference type="InterPro" id="IPR027491">
    <property type="entry name" value="Ribosomal_bL31_A"/>
</dbReference>
<dbReference type="InterPro" id="IPR042105">
    <property type="entry name" value="Ribosomal_bL31_sf"/>
</dbReference>
<dbReference type="NCBIfam" id="TIGR00105">
    <property type="entry name" value="L31"/>
    <property type="match status" value="1"/>
</dbReference>
<dbReference type="NCBIfam" id="NF000612">
    <property type="entry name" value="PRK00019.1"/>
    <property type="match status" value="1"/>
</dbReference>
<dbReference type="PANTHER" id="PTHR33280">
    <property type="entry name" value="50S RIBOSOMAL PROTEIN L31, CHLOROPLASTIC"/>
    <property type="match status" value="1"/>
</dbReference>
<dbReference type="PANTHER" id="PTHR33280:SF1">
    <property type="entry name" value="LARGE RIBOSOMAL SUBUNIT PROTEIN BL31C"/>
    <property type="match status" value="1"/>
</dbReference>
<dbReference type="Pfam" id="PF01197">
    <property type="entry name" value="Ribosomal_L31"/>
    <property type="match status" value="1"/>
</dbReference>
<dbReference type="PRINTS" id="PR01249">
    <property type="entry name" value="RIBOSOMALL31"/>
</dbReference>
<dbReference type="SUPFAM" id="SSF143800">
    <property type="entry name" value="L28p-like"/>
    <property type="match status" value="1"/>
</dbReference>
<dbReference type="PROSITE" id="PS01143">
    <property type="entry name" value="RIBOSOMAL_L31"/>
    <property type="match status" value="1"/>
</dbReference>
<proteinExistence type="inferred from homology"/>
<gene>
    <name evidence="1" type="primary">rpmE</name>
    <name type="ordered locus">GWCH70_3328</name>
</gene>
<comment type="function">
    <text evidence="1">Binds the 23S rRNA.</text>
</comment>
<comment type="cofactor">
    <cofactor evidence="1">
        <name>Zn(2+)</name>
        <dbReference type="ChEBI" id="CHEBI:29105"/>
    </cofactor>
    <text evidence="1">Binds 1 zinc ion per subunit.</text>
</comment>
<comment type="subunit">
    <text evidence="1">Part of the 50S ribosomal subunit.</text>
</comment>
<comment type="similarity">
    <text evidence="1">Belongs to the bacterial ribosomal protein bL31 family. Type A subfamily.</text>
</comment>